<keyword id="KW-0002">3D-structure</keyword>
<keyword id="KW-0007">Acetylation</keyword>
<keyword id="KW-0010">Activator</keyword>
<keyword id="KW-0025">Alternative splicing</keyword>
<keyword id="KW-0963">Cytoplasm</keyword>
<keyword id="KW-0225">Disease variant</keyword>
<keyword id="KW-0238">DNA-binding</keyword>
<keyword id="KW-0945">Host-virus interaction</keyword>
<keyword id="KW-0914">Notch signaling pathway</keyword>
<keyword id="KW-0539">Nucleus</keyword>
<keyword id="KW-1267">Proteomics identification</keyword>
<keyword id="KW-1185">Reference proteome</keyword>
<keyword id="KW-0677">Repeat</keyword>
<keyword id="KW-0678">Repressor</keyword>
<keyword id="KW-0804">Transcription</keyword>
<keyword id="KW-0805">Transcription regulation</keyword>
<comment type="function">
    <text evidence="1 8 10">Transcriptional regulator that plays a central role in Notch signaling, a signaling pathway involved in cell-cell communication that regulates a broad spectrum of cell-fate determinations. Acts as a transcriptional repressor when it is not associated with Notch proteins. When associated with some NICD product of Notch proteins (Notch intracellular domain), it acts as a transcriptional activator that activates transcription of Notch target genes. Probably represses or activates transcription via the recruitment of chromatin remodeling complexes containing histone deacetylase or histone acetylase proteins, respectively. Specifically binds to the immunoglobulin kappa-type J segment recombination signal sequence. Binds specifically to methylated DNA (PubMed:21991380). Binds to the oxygen responsive element of COX4I2 and activates its transcription under hypoxia conditions (4% oxygen) (PubMed:23303788). Negatively regulates the phagocyte oxidative burst in response to bacterial infection by repressing transcription of NADPH oxidase subunits (By similarity).</text>
</comment>
<comment type="subunit">
    <text evidence="1 3 4 5 6 7 10 11 12 13 14 16 17">Interacts with activated NOTCH1, NOTCH2 or NOTCH3. Interacts with MINT/SHARP. This interaction may mediate the recruitment of large corepressor complexes containing proteins such as HDAC1, HDAC2, NCOR2, SAP30, FHL1/KYOT2 and CIR1. Interacts with EP300, MAML1 and PTF1A. Interacts with RITA1/C12orf52, leading to nuclear export, prevent the interaction between RBPJ and NICD product and subsequent down-regulation of the Notch signaling pathway. Interacts with SNW1. Interacts with CHCHD2 and CXXC5 (PubMed:23303788). Interacts with BEND6 (via BEN domain). Interacts with NKAPL (By similarity). Interacts with ZMIZ1. Interacts with RBM15 (By similarity). Interacts with L3MBTL3 and KDM1A; the interaction with KDM1A is weaker in the absence of L3MBTL3 and the interaction with L3MBTL3 is impaired by Notch-derived peptide containing the intracellular domain (NICD) (PubMed:29030483).</text>
</comment>
<comment type="subunit">
    <text evidence="14 16">(Microbial infection) Interacts with EBV EBNA2 (PubMed:8016657). Interacts with EBV EBNA3 (PubMed:8627785). Interacts with EBV EBNA4 (PubMed:8627785). Interacts with EBV EBNA6 (via N-terminus) (PubMed:8627785).</text>
</comment>
<comment type="interaction">
    <interactant intactId="EBI-632552">
        <id>Q06330</id>
    </interactant>
    <interactant intactId="EBI-930964">
        <id>P54253</id>
        <label>ATXN1</label>
    </interactant>
    <organismsDiffer>false</organismsDiffer>
    <experiments>7</experiments>
</comment>
<comment type="interaction">
    <interactant intactId="EBI-632552">
        <id>Q06330</id>
    </interactant>
    <interactant intactId="EBI-8624731">
        <id>P0C7T5</id>
        <label>ATXN1L</label>
    </interactant>
    <organismsDiffer>false</organismsDiffer>
    <experiments>7</experiments>
</comment>
<comment type="interaction">
    <interactant intactId="EBI-632552">
        <id>Q06330</id>
    </interactant>
    <interactant intactId="EBI-2506081">
        <id>Q6P3S6</id>
        <label>FBXO42</label>
    </interactant>
    <organismsDiffer>false</organismsDiffer>
    <experiments>5</experiments>
</comment>
<comment type="interaction">
    <interactant intactId="EBI-632552">
        <id>Q06330</id>
    </interactant>
    <interactant intactId="EBI-710124">
        <id>O60341</id>
        <label>KDM1A</label>
    </interactant>
    <organismsDiffer>false</organismsDiffer>
    <experiments>4</experiments>
</comment>
<comment type="interaction">
    <interactant intactId="EBI-632552">
        <id>Q06330</id>
    </interactant>
    <interactant intactId="EBI-80830">
        <id>Q9Y618</id>
        <label>NCOR2</label>
    </interactant>
    <organismsDiffer>false</organismsDiffer>
    <experiments>3</experiments>
</comment>
<comment type="interaction">
    <interactant intactId="EBI-632552">
        <id>Q06330</id>
    </interactant>
    <interactant intactId="EBI-636374">
        <id>P46531</id>
        <label>NOTCH1</label>
    </interactant>
    <organismsDiffer>false</organismsDiffer>
    <experiments>13</experiments>
</comment>
<comment type="interaction">
    <interactant intactId="EBI-632552">
        <id>Q06330</id>
    </interactant>
    <interactant intactId="EBI-1560800">
        <id>Q9UPP1</id>
        <label>PHF8</label>
    </interactant>
    <organismsDiffer>false</organismsDiffer>
    <experiments>2</experiments>
</comment>
<comment type="interaction">
    <interactant intactId="EBI-632552">
        <id>Q06330</id>
    </interactant>
    <interactant intactId="EBI-2836148">
        <id>Q96K30</id>
        <label>RITA1</label>
    </interactant>
    <organismsDiffer>false</organismsDiffer>
    <experiments>10</experiments>
</comment>
<comment type="interaction">
    <interactant intactId="EBI-632552">
        <id>Q06330</id>
    </interactant>
    <interactant intactId="EBI-302489">
        <id>P51532</id>
        <label>SMARCA4</label>
    </interactant>
    <organismsDiffer>false</organismsDiffer>
    <experiments>2</experiments>
</comment>
<comment type="interaction">
    <interactant intactId="EBI-632552">
        <id>Q06330</id>
    </interactant>
    <interactant intactId="EBI-632715">
        <id>Q13573</id>
        <label>SNW1</label>
    </interactant>
    <organismsDiffer>false</organismsDiffer>
    <experiments>2</experiments>
</comment>
<comment type="interaction">
    <interactant intactId="EBI-632552">
        <id>Q06330</id>
    </interactant>
    <interactant intactId="EBI-765739">
        <id>Q96T58</id>
        <label>SPEN</label>
    </interactant>
    <organismsDiffer>false</organismsDiffer>
    <experiments>3</experiments>
</comment>
<comment type="interaction">
    <interactant intactId="EBI-632552">
        <id>Q06330</id>
    </interactant>
    <interactant intactId="EBI-366083">
        <id>P04637</id>
        <label>TP53</label>
    </interactant>
    <organismsDiffer>false</organismsDiffer>
    <experiments>5</experiments>
</comment>
<comment type="interaction">
    <interactant intactId="EBI-632552">
        <id>Q06330</id>
    </interactant>
    <interactant intactId="EBI-8052923">
        <id>P12978</id>
        <label>EBNA2</label>
    </interactant>
    <organismsDiffer>true</organismsDiffer>
    <experiments>2</experiments>
</comment>
<comment type="interaction">
    <interactant intactId="EBI-632552">
        <id>Q06330</id>
    </interactant>
    <interactant intactId="EBI-993115">
        <id>P12977</id>
        <label>EBNA3</label>
    </interactant>
    <organismsDiffer>true</organismsDiffer>
    <experiments>4</experiments>
</comment>
<comment type="interaction">
    <interactant intactId="EBI-632552">
        <id>Q06330</id>
    </interactant>
    <interactant intactId="EBI-9346250">
        <id>P03203</id>
        <label>EBNA4</label>
    </interactant>
    <organismsDiffer>true</organismsDiffer>
    <experiments>4</experiments>
</comment>
<comment type="interaction">
    <interactant intactId="EBI-632552">
        <id>Q06330</id>
    </interactant>
    <interactant intactId="EBI-9255985">
        <id>P03204</id>
        <label>EBNA6</label>
    </interactant>
    <organismsDiffer>true</organismsDiffer>
    <experiments>3</experiments>
</comment>
<comment type="interaction">
    <interactant intactId="EBI-632552">
        <id>Q06330</id>
    </interactant>
    <interactant intactId="EBI-1392707">
        <id>Q01705</id>
        <label>Notch1</label>
    </interactant>
    <organismsDiffer>true</organismsDiffer>
    <experiments>3</experiments>
</comment>
<comment type="interaction">
    <interactant intactId="EBI-632552">
        <id>Q06330</id>
    </interactant>
    <interactant intactId="EBI-8517225">
        <id>P0CJ62</id>
        <label>rita1</label>
    </interactant>
    <organismsDiffer>true</organismsDiffer>
    <experiments>2</experiments>
</comment>
<comment type="interaction">
    <interactant intactId="EBI-12599287">
        <id>Q06330-6</id>
    </interactant>
    <interactant intactId="EBI-636374">
        <id>P46531</id>
        <label>NOTCH1</label>
    </interactant>
    <organismsDiffer>false</organismsDiffer>
    <experiments>6</experiments>
</comment>
<comment type="subcellular location">
    <subcellularLocation>
        <location>Nucleus</location>
    </subcellularLocation>
    <subcellularLocation>
        <location>Cytoplasm</location>
    </subcellularLocation>
    <text>Mainly nuclear, upon interaction with RITA/C12orf52, translocates to the cytoplasm, down-regulating the Notch signaling pathway.</text>
</comment>
<comment type="alternative products">
    <event type="alternative splicing"/>
    <isoform>
        <id>Q06330-1</id>
        <name>APCR-2</name>
        <sequence type="displayed"/>
    </isoform>
    <isoform>
        <id>Q06330-2</id>
        <name>APCR-1</name>
        <sequence type="described" ref="VSP_002717"/>
    </isoform>
    <isoform>
        <id>Q06330-3</id>
        <name>APCR-3</name>
        <sequence type="described" ref="VSP_002718 VSP_002719"/>
    </isoform>
    <isoform>
        <id>Q06330-4</id>
        <name>4</name>
        <sequence type="described" ref="VSP_021573"/>
    </isoform>
    <isoform>
        <id>Q06330-5</id>
        <name>5</name>
        <sequence type="described" ref="VSP_021572"/>
    </isoform>
    <isoform>
        <id>Q06330-6</id>
        <name>6</name>
        <sequence type="described" ref="VSP_021574"/>
    </isoform>
    <isoform>
        <id>Q06330-7</id>
        <name>7</name>
        <sequence type="described" ref="VSP_042637"/>
    </isoform>
</comment>
<comment type="disease" evidence="9">
    <disease id="DI-03522">
        <name>Adams-Oliver syndrome 3</name>
        <acronym>AOS3</acronym>
        <description>An autosomal dominant form of Adams-Oliver syndrome, a disorder characterized by the congenital absence of skin (aplasia cutis congenita) in combination with transverse limb defects. Aplasia cutis congenita can be located anywhere on the body, but in the vast majority of the cases, it is present on the posterior parietal region where it is often associated with an underlying defect of the parietal bones. Limb abnormalities are typically limb truncation defects affecting the distal phalanges or entire digits (true ectrodactyly). Only rarely, metatarsals/metacarpals or more proximal limb structures are also affected. Apart from transverse limb defects, syndactyly, most commonly of second and third toes, can also be observed. The clinical features are highly variable and can also include cardiovascular malformations, brain abnormalities and vascular defects such as cutis marmorata and dilated scalp veins. AOS3 patients manifest characteristic vertex scalp defects and terminal limb defects, but without congenital heart defects, other associated defects, or immune defects.</description>
        <dbReference type="MIM" id="614814"/>
    </disease>
    <text>The disease is caused by variants affecting the gene represented in this entry.</text>
</comment>
<comment type="similarity">
    <text evidence="21">Belongs to the Su(H) family.</text>
</comment>
<comment type="caution">
    <text evidence="21">Despite some similarity with the 'phage' integrase family, it has no recombinase activity.</text>
</comment>
<comment type="sequence caution" evidence="21">
    <conflict type="erroneous initiation">
        <sequence resource="EMBL-CDS" id="AAA16254"/>
    </conflict>
    <text>Truncated N-terminus.</text>
</comment>
<feature type="chain" id="PRO_0000208567" description="Recombining binding protein suppressor of hairless">
    <location>
        <begin position="1"/>
        <end position="500"/>
    </location>
</feature>
<feature type="domain" description="IPT/TIG">
    <location>
        <begin position="355"/>
        <end position="445"/>
    </location>
</feature>
<feature type="region of interest" description="Disordered" evidence="2">
    <location>
        <begin position="1"/>
        <end position="30"/>
    </location>
</feature>
<feature type="region of interest" description="DNA-binding" evidence="6">
    <location>
        <begin position="57"/>
        <end position="67"/>
    </location>
</feature>
<feature type="region of interest" description="DNA-binding" evidence="6">
    <location>
        <begin position="165"/>
        <end position="170"/>
    </location>
</feature>
<feature type="region of interest" description="DNA-binding" evidence="6">
    <location>
        <begin position="192"/>
        <end position="197"/>
    </location>
</feature>
<feature type="region of interest" description="Disordered" evidence="2">
    <location>
        <begin position="465"/>
        <end position="500"/>
    </location>
</feature>
<feature type="compositionally biased region" description="Polar residues" evidence="2">
    <location>
        <begin position="465"/>
        <end position="481"/>
    </location>
</feature>
<feature type="compositionally biased region" description="Low complexity" evidence="2">
    <location>
        <begin position="482"/>
        <end position="500"/>
    </location>
</feature>
<feature type="modified residue" description="N6-acetyllysine" evidence="1">
    <location>
        <position position="175"/>
    </location>
</feature>
<feature type="splice variant" id="VSP_002718" description="In isoform APCR-3." evidence="20">
    <location>
        <begin position="1"/>
        <end position="89"/>
    </location>
</feature>
<feature type="splice variant" id="VSP_002717" description="In isoform APCR-1." evidence="20">
    <location>
        <begin position="1"/>
        <end position="75"/>
    </location>
</feature>
<feature type="splice variant" id="VSP_021572" description="In isoform 5." evidence="19">
    <location>
        <begin position="1"/>
        <end position="35"/>
    </location>
</feature>
<feature type="splice variant" id="VSP_021573" description="In isoform 4." evidence="19">
    <original>MDHTEGSPAEEPPAHAPSPG</original>
    <variation>MGGCR</variation>
    <location>
        <begin position="1"/>
        <end position="20"/>
    </location>
</feature>
<feature type="splice variant" id="VSP_021574" description="In isoform 6." evidence="19">
    <original>MDHTEGSPAEEPPAHAPSPG</original>
    <variation>MAWIKR</variation>
    <location>
        <begin position="1"/>
        <end position="20"/>
    </location>
</feature>
<feature type="splice variant" id="VSP_042637" description="In isoform 7." evidence="18">
    <original>MDHTEGSPAEEPPAHAPSP</original>
    <variation>MAPVVT</variation>
    <location>
        <begin position="1"/>
        <end position="19"/>
    </location>
</feature>
<feature type="splice variant" id="VSP_002719" description="In isoform APCR-3." evidence="20">
    <original>DGCSEQ</original>
    <variation>MAWIKR</variation>
    <location>
        <begin position="90"/>
        <end position="95"/>
    </location>
</feature>
<feature type="sequence variant" id="VAR_068929" description="In AOS3; shows decreased binding to the HES1 promoter compared to wild-type; dbSNP:rs387907270." evidence="9">
    <original>E</original>
    <variation>G</variation>
    <location>
        <position position="63"/>
    </location>
</feature>
<feature type="sequence variant" id="VAR_068930" description="In AOS3; shows decreased binding to the HES1 promoter compared to wild-type; dbSNP:rs387907271." evidence="9">
    <original>K</original>
    <variation>E</variation>
    <location>
        <position position="169"/>
    </location>
</feature>
<feature type="sequence variant" id="VAR_028994" description="In dbSNP:rs1064372.">
    <original>K</original>
    <variation>E</variation>
    <location>
        <position position="291"/>
    </location>
</feature>
<feature type="sequence variant" id="VAR_028995" description="In dbSNP:rs1064376.">
    <original>D</original>
    <variation>H</variation>
    <location>
        <position position="334"/>
    </location>
</feature>
<feature type="sequence variant" id="VAR_057244" description="In dbSNP:rs1064381.">
    <original>I</original>
    <variation>V</variation>
    <location>
        <position position="408"/>
    </location>
</feature>
<feature type="sequence variant" id="VAR_028996" description="In dbSNP:rs1064384.">
    <original>R</original>
    <variation>Q</variation>
    <location>
        <position position="419"/>
    </location>
</feature>
<feature type="sequence variant" id="VAR_028997" description="In dbSNP:rs1064387.">
    <original>P</original>
    <variation>S</variation>
    <location>
        <position position="425"/>
    </location>
</feature>
<feature type="sequence variant" id="VAR_028998" description="In dbSNP:rs1064402." evidence="15">
    <original>A</original>
    <variation>V</variation>
    <location>
        <position position="456"/>
    </location>
</feature>
<feature type="sequence conflict" description="In Ref. 1; AAA60258/AAA16253/AAA16254." evidence="21" ref="1">
    <original>S</original>
    <variation>L</variation>
    <location>
        <position position="7"/>
    </location>
</feature>
<feature type="sequence conflict" description="In Ref. 1; AAA60258." evidence="21" ref="1">
    <original>ML</original>
    <variation>IF</variation>
    <location>
        <begin position="140"/>
        <end position="141"/>
    </location>
</feature>
<feature type="sequence conflict" description="In Ref. 1; AAA60258." evidence="21" ref="1">
    <original>G</original>
    <variation>V</variation>
    <location>
        <position position="240"/>
    </location>
</feature>
<feature type="sequence conflict" description="In Ref. 1; AAA60258." evidence="21" ref="1">
    <original>V</original>
    <variation>C</variation>
    <location>
        <position position="248"/>
    </location>
</feature>
<feature type="sequence conflict" description="In Ref. 1; AAA60258." evidence="21" ref="1">
    <original>R</original>
    <variation>M</variation>
    <location>
        <position position="265"/>
    </location>
</feature>
<feature type="sequence conflict" description="In Ref. 1; AAA60258." evidence="21" ref="1">
    <original>Q</original>
    <variation>H</variation>
    <location>
        <position position="270"/>
    </location>
</feature>
<feature type="sequence conflict" description="In Ref. 1; AAA60258." evidence="21" ref="1">
    <original>R</original>
    <variation>P</variation>
    <location>
        <position position="462"/>
    </location>
</feature>
<feature type="helix" evidence="23">
    <location>
        <begin position="33"/>
        <end position="41"/>
    </location>
</feature>
<feature type="strand" evidence="23">
    <location>
        <begin position="50"/>
        <end position="57"/>
    </location>
</feature>
<feature type="strand" evidence="24">
    <location>
        <begin position="72"/>
        <end position="74"/>
    </location>
</feature>
<feature type="helix" evidence="23">
    <location>
        <begin position="79"/>
        <end position="88"/>
    </location>
</feature>
<feature type="turn" evidence="24">
    <location>
        <begin position="89"/>
        <end position="91"/>
    </location>
</feature>
<feature type="turn" evidence="23">
    <location>
        <begin position="94"/>
        <end position="96"/>
    </location>
</feature>
<feature type="strand" evidence="23">
    <location>
        <begin position="102"/>
        <end position="105"/>
    </location>
</feature>
<feature type="strand" evidence="24">
    <location>
        <begin position="118"/>
        <end position="121"/>
    </location>
</feature>
<feature type="strand" evidence="23">
    <location>
        <begin position="137"/>
        <end position="139"/>
    </location>
</feature>
<feature type="strand" evidence="23">
    <location>
        <begin position="141"/>
        <end position="146"/>
    </location>
</feature>
<feature type="strand" evidence="23">
    <location>
        <begin position="152"/>
        <end position="157"/>
    </location>
</feature>
<feature type="strand" evidence="23">
    <location>
        <begin position="161"/>
        <end position="166"/>
    </location>
</feature>
<feature type="strand" evidence="23">
    <location>
        <begin position="174"/>
        <end position="176"/>
    </location>
</feature>
<feature type="strand" evidence="23">
    <location>
        <begin position="178"/>
        <end position="180"/>
    </location>
</feature>
<feature type="strand" evidence="23">
    <location>
        <begin position="185"/>
        <end position="191"/>
    </location>
</feature>
<feature type="helix" evidence="23">
    <location>
        <begin position="193"/>
        <end position="195"/>
    </location>
</feature>
<feature type="turn" evidence="23">
    <location>
        <begin position="197"/>
        <end position="199"/>
    </location>
</feature>
<feature type="strand" evidence="23">
    <location>
        <begin position="204"/>
        <end position="206"/>
    </location>
</feature>
<feature type="strand" evidence="23">
    <location>
        <begin position="209"/>
        <end position="211"/>
    </location>
</feature>
<feature type="strand" evidence="23">
    <location>
        <begin position="220"/>
        <end position="225"/>
    </location>
</feature>
<feature type="strand" evidence="23">
    <location>
        <begin position="231"/>
        <end position="234"/>
    </location>
</feature>
<feature type="strand" evidence="23">
    <location>
        <begin position="246"/>
        <end position="255"/>
    </location>
</feature>
<feature type="strand" evidence="23">
    <location>
        <begin position="262"/>
        <end position="268"/>
    </location>
</feature>
<feature type="strand" evidence="23">
    <location>
        <begin position="271"/>
        <end position="275"/>
    </location>
</feature>
<feature type="strand" evidence="23">
    <location>
        <begin position="284"/>
        <end position="289"/>
    </location>
</feature>
<feature type="strand" evidence="23">
    <location>
        <begin position="291"/>
        <end position="295"/>
    </location>
</feature>
<feature type="strand" evidence="24">
    <location>
        <begin position="297"/>
        <end position="299"/>
    </location>
</feature>
<feature type="strand" evidence="23">
    <location>
        <begin position="302"/>
        <end position="306"/>
    </location>
</feature>
<feature type="strand" evidence="23">
    <location>
        <begin position="319"/>
        <end position="321"/>
    </location>
</feature>
<feature type="strand" evidence="23">
    <location>
        <begin position="328"/>
        <end position="336"/>
    </location>
</feature>
<feature type="strand" evidence="24">
    <location>
        <begin position="343"/>
        <end position="345"/>
    </location>
</feature>
<feature type="strand" evidence="23">
    <location>
        <begin position="356"/>
        <end position="362"/>
    </location>
</feature>
<feature type="helix" evidence="23">
    <location>
        <begin position="366"/>
        <end position="368"/>
    </location>
</feature>
<feature type="strand" evidence="23">
    <location>
        <begin position="370"/>
        <end position="377"/>
    </location>
</feature>
<feature type="strand" evidence="23">
    <location>
        <begin position="382"/>
        <end position="386"/>
    </location>
</feature>
<feature type="strand" evidence="23">
    <location>
        <begin position="389"/>
        <end position="391"/>
    </location>
</feature>
<feature type="strand" evidence="23">
    <location>
        <begin position="393"/>
        <end position="397"/>
    </location>
</feature>
<feature type="strand" evidence="23">
    <location>
        <begin position="400"/>
        <end position="404"/>
    </location>
</feature>
<feature type="helix" evidence="23">
    <location>
        <begin position="408"/>
        <end position="411"/>
    </location>
</feature>
<feature type="strand" evidence="23">
    <location>
        <begin position="412"/>
        <end position="414"/>
    </location>
</feature>
<feature type="strand" evidence="23">
    <location>
        <begin position="426"/>
        <end position="430"/>
    </location>
</feature>
<feature type="strand" evidence="24">
    <location>
        <begin position="431"/>
        <end position="433"/>
    </location>
</feature>
<feature type="strand" evidence="23">
    <location>
        <begin position="435"/>
        <end position="437"/>
    </location>
</feature>
<evidence type="ECO:0000250" key="1">
    <source>
        <dbReference type="UniProtKB" id="P31266"/>
    </source>
</evidence>
<evidence type="ECO:0000256" key="2">
    <source>
        <dbReference type="SAM" id="MobiDB-lite"/>
    </source>
</evidence>
<evidence type="ECO:0000269" key="3">
    <source>
    </source>
</evidence>
<evidence type="ECO:0000269" key="4">
    <source>
    </source>
</evidence>
<evidence type="ECO:0000269" key="5">
    <source>
    </source>
</evidence>
<evidence type="ECO:0000269" key="6">
    <source>
    </source>
</evidence>
<evidence type="ECO:0000269" key="7">
    <source>
    </source>
</evidence>
<evidence type="ECO:0000269" key="8">
    <source>
    </source>
</evidence>
<evidence type="ECO:0000269" key="9">
    <source>
    </source>
</evidence>
<evidence type="ECO:0000269" key="10">
    <source>
    </source>
</evidence>
<evidence type="ECO:0000269" key="11">
    <source>
    </source>
</evidence>
<evidence type="ECO:0000269" key="12">
    <source>
    </source>
</evidence>
<evidence type="ECO:0000269" key="13">
    <source>
    </source>
</evidence>
<evidence type="ECO:0000269" key="14">
    <source>
    </source>
</evidence>
<evidence type="ECO:0000269" key="15">
    <source>
    </source>
</evidence>
<evidence type="ECO:0000269" key="16">
    <source>
    </source>
</evidence>
<evidence type="ECO:0000269" key="17">
    <source>
    </source>
</evidence>
<evidence type="ECO:0000303" key="18">
    <source>
    </source>
</evidence>
<evidence type="ECO:0000303" key="19">
    <source>
    </source>
</evidence>
<evidence type="ECO:0000303" key="20">
    <source>
    </source>
</evidence>
<evidence type="ECO:0000305" key="21"/>
<evidence type="ECO:0000312" key="22">
    <source>
        <dbReference type="HGNC" id="HGNC:5724"/>
    </source>
</evidence>
<evidence type="ECO:0007829" key="23">
    <source>
        <dbReference type="PDB" id="2F8X"/>
    </source>
</evidence>
<evidence type="ECO:0007829" key="24">
    <source>
        <dbReference type="PDB" id="3NBN"/>
    </source>
</evidence>
<accession>Q06330</accession>
<accession>B4DY22</accession>
<accession>Q5XKH9</accession>
<accession>Q6P1N3</accession>
<reference key="1">
    <citation type="journal article" date="1993" name="Genomics">
        <title>Human Jk recombination signal binding protein gene (IGKJRB): comparison with its mouse homologue.</title>
        <authorList>
            <person name="Amakawa R."/>
            <person name="Jing W."/>
            <person name="Ozawa K."/>
            <person name="Matsunami N."/>
            <person name="Hamaguchi Y."/>
            <person name="Matsuda F."/>
            <person name="Kawaichi M."/>
            <person name="Honjo T."/>
        </authorList>
    </citation>
    <scope>NUCLEOTIDE SEQUENCE [MRNA] (ISOFORMS APCR-1; APCR-2 AND APCR-3)</scope>
    <scope>VARIANT VAL-456</scope>
    <source>
        <tissue>Placenta</tissue>
    </source>
</reference>
<reference key="2">
    <citation type="journal article" date="2004" name="Nat. Genet.">
        <title>Complete sequencing and characterization of 21,243 full-length human cDNAs.</title>
        <authorList>
            <person name="Ota T."/>
            <person name="Suzuki Y."/>
            <person name="Nishikawa T."/>
            <person name="Otsuki T."/>
            <person name="Sugiyama T."/>
            <person name="Irie R."/>
            <person name="Wakamatsu A."/>
            <person name="Hayashi K."/>
            <person name="Sato H."/>
            <person name="Nagai K."/>
            <person name="Kimura K."/>
            <person name="Makita H."/>
            <person name="Sekine M."/>
            <person name="Obayashi M."/>
            <person name="Nishi T."/>
            <person name="Shibahara T."/>
            <person name="Tanaka T."/>
            <person name="Ishii S."/>
            <person name="Yamamoto J."/>
            <person name="Saito K."/>
            <person name="Kawai Y."/>
            <person name="Isono Y."/>
            <person name="Nakamura Y."/>
            <person name="Nagahari K."/>
            <person name="Murakami K."/>
            <person name="Yasuda T."/>
            <person name="Iwayanagi T."/>
            <person name="Wagatsuma M."/>
            <person name="Shiratori A."/>
            <person name="Sudo H."/>
            <person name="Hosoiri T."/>
            <person name="Kaku Y."/>
            <person name="Kodaira H."/>
            <person name="Kondo H."/>
            <person name="Sugawara M."/>
            <person name="Takahashi M."/>
            <person name="Kanda K."/>
            <person name="Yokoi T."/>
            <person name="Furuya T."/>
            <person name="Kikkawa E."/>
            <person name="Omura Y."/>
            <person name="Abe K."/>
            <person name="Kamihara K."/>
            <person name="Katsuta N."/>
            <person name="Sato K."/>
            <person name="Tanikawa M."/>
            <person name="Yamazaki M."/>
            <person name="Ninomiya K."/>
            <person name="Ishibashi T."/>
            <person name="Yamashita H."/>
            <person name="Murakawa K."/>
            <person name="Fujimori K."/>
            <person name="Tanai H."/>
            <person name="Kimata M."/>
            <person name="Watanabe M."/>
            <person name="Hiraoka S."/>
            <person name="Chiba Y."/>
            <person name="Ishida S."/>
            <person name="Ono Y."/>
            <person name="Takiguchi S."/>
            <person name="Watanabe S."/>
            <person name="Yosida M."/>
            <person name="Hotuta T."/>
            <person name="Kusano J."/>
            <person name="Kanehori K."/>
            <person name="Takahashi-Fujii A."/>
            <person name="Hara H."/>
            <person name="Tanase T.-O."/>
            <person name="Nomura Y."/>
            <person name="Togiya S."/>
            <person name="Komai F."/>
            <person name="Hara R."/>
            <person name="Takeuchi K."/>
            <person name="Arita M."/>
            <person name="Imose N."/>
            <person name="Musashino K."/>
            <person name="Yuuki H."/>
            <person name="Oshima A."/>
            <person name="Sasaki N."/>
            <person name="Aotsuka S."/>
            <person name="Yoshikawa Y."/>
            <person name="Matsunawa H."/>
            <person name="Ichihara T."/>
            <person name="Shiohata N."/>
            <person name="Sano S."/>
            <person name="Moriya S."/>
            <person name="Momiyama H."/>
            <person name="Satoh N."/>
            <person name="Takami S."/>
            <person name="Terashima Y."/>
            <person name="Suzuki O."/>
            <person name="Nakagawa S."/>
            <person name="Senoh A."/>
            <person name="Mizoguchi H."/>
            <person name="Goto Y."/>
            <person name="Shimizu F."/>
            <person name="Wakebe H."/>
            <person name="Hishigaki H."/>
            <person name="Watanabe T."/>
            <person name="Sugiyama A."/>
            <person name="Takemoto M."/>
            <person name="Kawakami B."/>
            <person name="Yamazaki M."/>
            <person name="Watanabe K."/>
            <person name="Kumagai A."/>
            <person name="Itakura S."/>
            <person name="Fukuzumi Y."/>
            <person name="Fujimori Y."/>
            <person name="Komiyama M."/>
            <person name="Tashiro H."/>
            <person name="Tanigami A."/>
            <person name="Fujiwara T."/>
            <person name="Ono T."/>
            <person name="Yamada K."/>
            <person name="Fujii Y."/>
            <person name="Ozaki K."/>
            <person name="Hirao M."/>
            <person name="Ohmori Y."/>
            <person name="Kawabata A."/>
            <person name="Hikiji T."/>
            <person name="Kobatake N."/>
            <person name="Inagaki H."/>
            <person name="Ikema Y."/>
            <person name="Okamoto S."/>
            <person name="Okitani R."/>
            <person name="Kawakami T."/>
            <person name="Noguchi S."/>
            <person name="Itoh T."/>
            <person name="Shigeta K."/>
            <person name="Senba T."/>
            <person name="Matsumura K."/>
            <person name="Nakajima Y."/>
            <person name="Mizuno T."/>
            <person name="Morinaga M."/>
            <person name="Sasaki M."/>
            <person name="Togashi T."/>
            <person name="Oyama M."/>
            <person name="Hata H."/>
            <person name="Watanabe M."/>
            <person name="Komatsu T."/>
            <person name="Mizushima-Sugano J."/>
            <person name="Satoh T."/>
            <person name="Shirai Y."/>
            <person name="Takahashi Y."/>
            <person name="Nakagawa K."/>
            <person name="Okumura K."/>
            <person name="Nagase T."/>
            <person name="Nomura N."/>
            <person name="Kikuchi H."/>
            <person name="Masuho Y."/>
            <person name="Yamashita R."/>
            <person name="Nakai K."/>
            <person name="Yada T."/>
            <person name="Nakamura Y."/>
            <person name="Ohara O."/>
            <person name="Isogai T."/>
            <person name="Sugano S."/>
        </authorList>
    </citation>
    <scope>NUCLEOTIDE SEQUENCE [LARGE SCALE MRNA] (ISOFORM 7)</scope>
    <source>
        <tissue>Testis</tissue>
    </source>
</reference>
<reference key="3">
    <citation type="journal article" date="2005" name="Nature">
        <title>Generation and annotation of the DNA sequences of human chromosomes 2 and 4.</title>
        <authorList>
            <person name="Hillier L.W."/>
            <person name="Graves T.A."/>
            <person name="Fulton R.S."/>
            <person name="Fulton L.A."/>
            <person name="Pepin K.H."/>
            <person name="Minx P."/>
            <person name="Wagner-McPherson C."/>
            <person name="Layman D."/>
            <person name="Wylie K."/>
            <person name="Sekhon M."/>
            <person name="Becker M.C."/>
            <person name="Fewell G.A."/>
            <person name="Delehaunty K.D."/>
            <person name="Miner T.L."/>
            <person name="Nash W.E."/>
            <person name="Kremitzki C."/>
            <person name="Oddy L."/>
            <person name="Du H."/>
            <person name="Sun H."/>
            <person name="Bradshaw-Cordum H."/>
            <person name="Ali J."/>
            <person name="Carter J."/>
            <person name="Cordes M."/>
            <person name="Harris A."/>
            <person name="Isak A."/>
            <person name="van Brunt A."/>
            <person name="Nguyen C."/>
            <person name="Du F."/>
            <person name="Courtney L."/>
            <person name="Kalicki J."/>
            <person name="Ozersky P."/>
            <person name="Abbott S."/>
            <person name="Armstrong J."/>
            <person name="Belter E.A."/>
            <person name="Caruso L."/>
            <person name="Cedroni M."/>
            <person name="Cotton M."/>
            <person name="Davidson T."/>
            <person name="Desai A."/>
            <person name="Elliott G."/>
            <person name="Erb T."/>
            <person name="Fronick C."/>
            <person name="Gaige T."/>
            <person name="Haakenson W."/>
            <person name="Haglund K."/>
            <person name="Holmes A."/>
            <person name="Harkins R."/>
            <person name="Kim K."/>
            <person name="Kruchowski S.S."/>
            <person name="Strong C.M."/>
            <person name="Grewal N."/>
            <person name="Goyea E."/>
            <person name="Hou S."/>
            <person name="Levy A."/>
            <person name="Martinka S."/>
            <person name="Mead K."/>
            <person name="McLellan M.D."/>
            <person name="Meyer R."/>
            <person name="Randall-Maher J."/>
            <person name="Tomlinson C."/>
            <person name="Dauphin-Kohlberg S."/>
            <person name="Kozlowicz-Reilly A."/>
            <person name="Shah N."/>
            <person name="Swearengen-Shahid S."/>
            <person name="Snider J."/>
            <person name="Strong J.T."/>
            <person name="Thompson J."/>
            <person name="Yoakum M."/>
            <person name="Leonard S."/>
            <person name="Pearman C."/>
            <person name="Trani L."/>
            <person name="Radionenko M."/>
            <person name="Waligorski J.E."/>
            <person name="Wang C."/>
            <person name="Rock S.M."/>
            <person name="Tin-Wollam A.-M."/>
            <person name="Maupin R."/>
            <person name="Latreille P."/>
            <person name="Wendl M.C."/>
            <person name="Yang S.-P."/>
            <person name="Pohl C."/>
            <person name="Wallis J.W."/>
            <person name="Spieth J."/>
            <person name="Bieri T.A."/>
            <person name="Berkowicz N."/>
            <person name="Nelson J.O."/>
            <person name="Osborne J."/>
            <person name="Ding L."/>
            <person name="Meyer R."/>
            <person name="Sabo A."/>
            <person name="Shotland Y."/>
            <person name="Sinha P."/>
            <person name="Wohldmann P.E."/>
            <person name="Cook L.L."/>
            <person name="Hickenbotham M.T."/>
            <person name="Eldred J."/>
            <person name="Williams D."/>
            <person name="Jones T.A."/>
            <person name="She X."/>
            <person name="Ciccarelli F.D."/>
            <person name="Izaurralde E."/>
            <person name="Taylor J."/>
            <person name="Schmutz J."/>
            <person name="Myers R.M."/>
            <person name="Cox D.R."/>
            <person name="Huang X."/>
            <person name="McPherson J.D."/>
            <person name="Mardis E.R."/>
            <person name="Clifton S.W."/>
            <person name="Warren W.C."/>
            <person name="Chinwalla A.T."/>
            <person name="Eddy S.R."/>
            <person name="Marra M.A."/>
            <person name="Ovcharenko I."/>
            <person name="Furey T.S."/>
            <person name="Miller W."/>
            <person name="Eichler E.E."/>
            <person name="Bork P."/>
            <person name="Suyama M."/>
            <person name="Torrents D."/>
            <person name="Waterston R.H."/>
            <person name="Wilson R.K."/>
        </authorList>
    </citation>
    <scope>NUCLEOTIDE SEQUENCE [LARGE SCALE GENOMIC DNA]</scope>
</reference>
<reference key="4">
    <citation type="journal article" date="2004" name="Genome Res.">
        <title>The status, quality, and expansion of the NIH full-length cDNA project: the Mammalian Gene Collection (MGC).</title>
        <authorList>
            <consortium name="The MGC Project Team"/>
        </authorList>
    </citation>
    <scope>NUCLEOTIDE SEQUENCE [LARGE SCALE MRNA] (ISOFORMS 4; 5 AND 6)</scope>
    <source>
        <tissue>Eye</tissue>
    </source>
</reference>
<reference key="5">
    <citation type="journal article" date="1994" name="Science">
        <title>Mediation of Epstein-Barr virus EBNA2 transactivation by recombination signal-binding protein J kappa.</title>
        <authorList>
            <person name="Henkel T."/>
            <person name="Ling P.D."/>
            <person name="Hayward S.D."/>
            <person name="Peterson M.G."/>
        </authorList>
    </citation>
    <scope>INTERACTION WITH EPSTEIN-BARR VIRUS EBNA2 (MICROBIAL INFECTION)</scope>
</reference>
<reference key="6">
    <citation type="journal article" date="1996" name="J. Virol.">
        <title>The amino-terminal domains of Epstein-Barr virus nuclear proteins 3A, 3B, and 3C interact with RBPJ(kappa).</title>
        <authorList>
            <person name="Robertson E.S."/>
            <person name="Lin J."/>
            <person name="Kieff E."/>
        </authorList>
    </citation>
    <scope>INTERACTION WITH EPSTEIN-BARR VIRUS EBNA3 (MICROBIAL INFECTION)</scope>
    <scope>INTERACTION WITH EPSTEIN-BARR VIRUS EBNA4 (MICROBIAL INFECTION)</scope>
    <scope>INTERACTION WITH EPSTEIN-BARR VIRUS EBNA6 (MICROBIAL INFECTION)</scope>
</reference>
<reference key="7">
    <citation type="journal article" date="1999" name="Int. J. Cancer">
        <title>Antigens recognized by autologous antibody in patients with renal-cell carcinoma.</title>
        <authorList>
            <person name="Scanlan M.J."/>
            <person name="Gordan J.D."/>
            <person name="Williamson B."/>
            <person name="Stockert E."/>
            <person name="Bander N.H."/>
            <person name="Jongeneel C.V."/>
            <person name="Gure A.O."/>
            <person name="Jaeger D."/>
            <person name="Jaeger E."/>
            <person name="Knuth A."/>
            <person name="Chen Y.-T."/>
            <person name="Old L.J."/>
        </authorList>
    </citation>
    <scope>IDENTIFICATION AS A RENAL CANCER ANTIGEN</scope>
    <source>
        <tissue>Renal cell carcinoma</tissue>
    </source>
</reference>
<reference key="8">
    <citation type="journal article" date="1999" name="Proc. Natl. Acad. Sci. U.S.A.">
        <title>CIR, a corepressor linking the DNA binding factor CBF1 to the histone deacetylase complex.</title>
        <authorList>
            <person name="Hsieh J.J.-D."/>
            <person name="Zhou S."/>
            <person name="Chen L."/>
            <person name="Young D.B."/>
            <person name="Hayward S.D."/>
        </authorList>
    </citation>
    <scope>INTERACTION WITH CIR1</scope>
    <scope>SUBCELLULAR LOCATION</scope>
</reference>
<reference key="9">
    <citation type="journal article" date="2000" name="J. Virol.">
        <title>A role for SKIP in EBNA2 activation of CBF1-repressed promoters.</title>
        <authorList>
            <person name="Zhou S."/>
            <person name="Fujimuro M."/>
            <person name="Hsieh J.J."/>
            <person name="Chen L."/>
            <person name="Hayward S.D."/>
        </authorList>
    </citation>
    <scope>INTERACTION WITH SNW1</scope>
</reference>
<reference key="10">
    <citation type="journal article" date="2000" name="Leukemia">
        <title>Intracellular forms of human NOTCH1 interact at distinctly different levels with RBP-jkappa in human B and T cells.</title>
        <authorList>
            <person name="Callahan J."/>
            <person name="Aster J."/>
            <person name="Sklar J."/>
            <person name="Kieff E."/>
            <person name="Robertson E.S."/>
        </authorList>
    </citation>
    <scope>INTERACTION WITH NOTCH1</scope>
</reference>
<reference key="11">
    <citation type="journal article" date="2002" name="EMBO J.">
        <title>SHARP is a novel component of the Notch/RBP-Jkappa signalling pathway.</title>
        <authorList>
            <person name="Oswald F."/>
            <person name="Kostezka U."/>
            <person name="Astrahantseff K."/>
            <person name="Bourteele S."/>
            <person name="Dillinger K."/>
            <person name="Zechner U."/>
            <person name="Ludwig L."/>
            <person name="Wilda M."/>
            <person name="Hameister H."/>
            <person name="Knoechel W."/>
            <person name="Liptay S."/>
            <person name="Schmid R.M."/>
        </authorList>
    </citation>
    <scope>INTERACTION WITH MINT</scope>
</reference>
<reference key="12">
    <citation type="journal article" date="2011" name="EMBO J.">
        <title>RITA, a novel modulator of Notch signalling, acts via nuclear export of RBP-J.</title>
        <authorList>
            <person name="Wacker S.A."/>
            <person name="Alvarado C."/>
            <person name="von Wichert G."/>
            <person name="Knippschild U."/>
            <person name="Wiedenmann J."/>
            <person name="Clauss K."/>
            <person name="Nienhaus G.U."/>
            <person name="Hameister H."/>
            <person name="Baumann B."/>
            <person name="Borggrefe T."/>
            <person name="Knochel W."/>
            <person name="Oswald F."/>
        </authorList>
    </citation>
    <scope>INTERACTION WITH C12ORF52</scope>
    <scope>SUBCELLULAR LOCATION</scope>
</reference>
<reference key="13">
    <citation type="journal article" date="2011" name="PLoS ONE">
        <title>A SILAC-based screen for Methyl-CpG binding proteins identifies RBP-J as a DNA methylation and sequence-specific binding protein.</title>
        <authorList>
            <person name="Bartels S.J."/>
            <person name="Spruijt C.G."/>
            <person name="Brinkman A.B."/>
            <person name="Jansen P.W."/>
            <person name="Vermeulen M."/>
            <person name="Stunnenberg H.G."/>
        </authorList>
    </citation>
    <scope>FUNCTION</scope>
    <scope>METHYLATED DNA-BINDING</scope>
</reference>
<reference key="14">
    <citation type="journal article" date="2013" name="Development">
        <title>BEND6 is a nuclear antagonist of Notch signaling during self-renewal of neural stem cells.</title>
        <authorList>
            <person name="Dai Q."/>
            <person name="Andreu-Agullo C."/>
            <person name="Insolera R."/>
            <person name="Wong L.C."/>
            <person name="Shi S.H."/>
            <person name="Lai E.C."/>
        </authorList>
    </citation>
    <scope>INTERACTION WITH BEND6</scope>
</reference>
<reference key="15">
    <citation type="journal article" date="2013" name="Nucleic Acids Res.">
        <title>Oxygen-dependent expression of cytochrome c oxidase subunit 4-2 gene expression is mediated by transcription factors RBPJ, CXXC5 and CHCHD2.</title>
        <authorList>
            <person name="Aras S."/>
            <person name="Pak O."/>
            <person name="Sommer N."/>
            <person name="Finley R. Jr."/>
            <person name="Huttemann M."/>
            <person name="Weissmann N."/>
            <person name="Grossman L.I."/>
        </authorList>
    </citation>
    <scope>FUNCTION IN COX4I2 TRANSCRIPTION</scope>
    <scope>INTERACTION WITH CHCHD2 AND CXXC5</scope>
</reference>
<reference key="16">
    <citation type="journal article" date="2015" name="Immunity">
        <title>The PIAS-like coactivator Zmiz1 is a direct and selective cofactor of Notch1 in T cell development and leukemia.</title>
        <authorList>
            <person name="Pinnell N."/>
            <person name="Yan R."/>
            <person name="Cho H.J."/>
            <person name="Keeley T."/>
            <person name="Murai M.J."/>
            <person name="Liu Y."/>
            <person name="Alarcon A.S."/>
            <person name="Qin J."/>
            <person name="Wang Q."/>
            <person name="Kuick R."/>
            <person name="Elenitoba-Johnson K.S."/>
            <person name="Maillard I."/>
            <person name="Samuelson L.C."/>
            <person name="Cierpicki T."/>
            <person name="Chiang M.Y."/>
        </authorList>
    </citation>
    <scope>INTERACTION WITH ZMIZ1</scope>
</reference>
<reference key="17">
    <citation type="journal article" date="2017" name="EMBO J.">
        <title>RBPJ/CBF1 interacts with L3MBTL3/MBT1 to promote repression of Notch signaling via histone demethylase KDM1A/LSD1.</title>
        <authorList>
            <person name="Xu T."/>
            <person name="Park S.S."/>
            <person name="Giaimo B.D."/>
            <person name="Hall D."/>
            <person name="Ferrante F."/>
            <person name="Ho D.M."/>
            <person name="Hori K."/>
            <person name="Anhezini L."/>
            <person name="Ertl I."/>
            <person name="Bartkuhn M."/>
            <person name="Zhang H."/>
            <person name="Milon E."/>
            <person name="Ha K."/>
            <person name="Conlon K.P."/>
            <person name="Kuick R."/>
            <person name="Govindarajoo B."/>
            <person name="Zhang Y."/>
            <person name="Sun Y."/>
            <person name="Dou Y."/>
            <person name="Basrur V."/>
            <person name="Elenitoba-Johnson K.S."/>
            <person name="Nesvizhskii A.I."/>
            <person name="Ceron J."/>
            <person name="Lee C.Y."/>
            <person name="Borggrefe T."/>
            <person name="Kovall R.A."/>
            <person name="Rual J.F."/>
        </authorList>
    </citation>
    <scope>INTERACTION WITH L3MBTL3 AND KDM1A</scope>
</reference>
<reference key="18">
    <citation type="journal article" date="2006" name="Cell">
        <title>Structural basis for cooperativity in recruitment of MAML coactivators to Notch transcription complexes.</title>
        <authorList>
            <person name="Nam Y."/>
            <person name="Sliz P."/>
            <person name="Song L."/>
            <person name="Aster J.C."/>
            <person name="Blacklow S.C."/>
        </authorList>
    </citation>
    <scope>X-RAY CRYSTALLOGRAPHY (3.25 ANGSTROMS) OF 23-449 IN COMPLEX WITH DNA; MAML1 AND NOTCH1</scope>
</reference>
<reference key="19">
    <citation type="journal article" date="2012" name="Am. J. Hum. Genet.">
        <title>RBPJ mutations identified in two families affected by Adams-Oliver syndrome.</title>
        <authorList>
            <person name="Hassed S.J."/>
            <person name="Wiley G.B."/>
            <person name="Wang S."/>
            <person name="Lee J.Y."/>
            <person name="Li S."/>
            <person name="Xu W."/>
            <person name="Zhao Z.J."/>
            <person name="Mulvihill J.J."/>
            <person name="Robertson J."/>
            <person name="Warner J."/>
            <person name="Gaffney P.M."/>
        </authorList>
    </citation>
    <scope>VARIANTS AOS3 GLY-63 AND GLU-169</scope>
    <scope>CHARACTERIZATION OF VARIANTS AOS3 GLY-63 AND GLU-169</scope>
</reference>
<organism>
    <name type="scientific">Homo sapiens</name>
    <name type="common">Human</name>
    <dbReference type="NCBI Taxonomy" id="9606"/>
    <lineage>
        <taxon>Eukaryota</taxon>
        <taxon>Metazoa</taxon>
        <taxon>Chordata</taxon>
        <taxon>Craniata</taxon>
        <taxon>Vertebrata</taxon>
        <taxon>Euteleostomi</taxon>
        <taxon>Mammalia</taxon>
        <taxon>Eutheria</taxon>
        <taxon>Euarchontoglires</taxon>
        <taxon>Primates</taxon>
        <taxon>Haplorrhini</taxon>
        <taxon>Catarrhini</taxon>
        <taxon>Hominidae</taxon>
        <taxon>Homo</taxon>
    </lineage>
</organism>
<protein>
    <recommendedName>
        <fullName>Recombining binding protein suppressor of hairless</fullName>
    </recommendedName>
    <alternativeName>
        <fullName>CBF-1</fullName>
    </alternativeName>
    <alternativeName>
        <fullName>J kappa-recombination signal-binding protein</fullName>
    </alternativeName>
    <alternativeName>
        <fullName>RBP-J kappa</fullName>
        <shortName>RBP-J</shortName>
        <shortName>RBP-JK</shortName>
    </alternativeName>
    <alternativeName>
        <fullName>Renal carcinoma antigen NY-REN-30</fullName>
    </alternativeName>
</protein>
<gene>
    <name evidence="22" type="primary">RBPJ</name>
    <name type="synonym">IGKJRB</name>
    <name type="synonym">IGKJRB1</name>
    <name type="synonym">RBPJK</name>
    <name type="synonym">RBPSUH</name>
</gene>
<proteinExistence type="evidence at protein level"/>
<dbReference type="EMBL" id="L07872">
    <property type="protein sequence ID" value="AAA60258.1"/>
    <property type="molecule type" value="mRNA"/>
</dbReference>
<dbReference type="EMBL" id="L07874">
    <property type="protein sequence ID" value="AAA16253.1"/>
    <property type="molecule type" value="mRNA"/>
</dbReference>
<dbReference type="EMBL" id="L07875">
    <property type="protein sequence ID" value="AAA16254.1"/>
    <property type="status" value="ALT_INIT"/>
    <property type="molecule type" value="mRNA"/>
</dbReference>
<dbReference type="EMBL" id="L07876">
    <property type="protein sequence ID" value="AAA16356.1"/>
    <property type="molecule type" value="mRNA"/>
</dbReference>
<dbReference type="EMBL" id="AK302230">
    <property type="protein sequence ID" value="BAG63584.1"/>
    <property type="molecule type" value="mRNA"/>
</dbReference>
<dbReference type="EMBL" id="AC093637">
    <property type="status" value="NOT_ANNOTATED_CDS"/>
    <property type="molecule type" value="Genomic_DNA"/>
</dbReference>
<dbReference type="EMBL" id="AC097109">
    <property type="status" value="NOT_ANNOTATED_CDS"/>
    <property type="molecule type" value="Genomic_DNA"/>
</dbReference>
<dbReference type="EMBL" id="AC097714">
    <property type="status" value="NOT_ANNOTATED_CDS"/>
    <property type="molecule type" value="Genomic_DNA"/>
</dbReference>
<dbReference type="EMBL" id="AC111003">
    <property type="status" value="NOT_ANNOTATED_CDS"/>
    <property type="molecule type" value="Genomic_DNA"/>
</dbReference>
<dbReference type="EMBL" id="BC020780">
    <property type="protein sequence ID" value="AAH20780.1"/>
    <property type="molecule type" value="mRNA"/>
</dbReference>
<dbReference type="EMBL" id="BC053531">
    <property type="status" value="NOT_ANNOTATED_CDS"/>
    <property type="molecule type" value="mRNA"/>
</dbReference>
<dbReference type="EMBL" id="BC064976">
    <property type="protein sequence ID" value="AAH64976.1"/>
    <property type="molecule type" value="mRNA"/>
</dbReference>
<dbReference type="CCDS" id="CCDS33969.1">
    <molecule id="Q06330-6"/>
</dbReference>
<dbReference type="CCDS" id="CCDS3437.1">
    <molecule id="Q06330-1"/>
</dbReference>
<dbReference type="CCDS" id="CCDS43219.1">
    <molecule id="Q06330-7"/>
</dbReference>
<dbReference type="CCDS" id="CCDS87214.1">
    <molecule id="Q06330-5"/>
</dbReference>
<dbReference type="PIR" id="A47214">
    <property type="entry name" value="A47214"/>
</dbReference>
<dbReference type="RefSeq" id="NP_001350506.1">
    <molecule id="Q06330-5"/>
    <property type="nucleotide sequence ID" value="NM_001363577.2"/>
</dbReference>
<dbReference type="RefSeq" id="NP_001361329.1">
    <molecule id="Q06330-1"/>
    <property type="nucleotide sequence ID" value="NM_001374400.1"/>
</dbReference>
<dbReference type="RefSeq" id="NP_001361330.1">
    <molecule id="Q06330-6"/>
    <property type="nucleotide sequence ID" value="NM_001374401.1"/>
</dbReference>
<dbReference type="RefSeq" id="NP_001361331.1">
    <molecule id="Q06330-6"/>
    <property type="nucleotide sequence ID" value="NM_001374402.1"/>
</dbReference>
<dbReference type="RefSeq" id="NP_001361332.1">
    <molecule id="Q06330-6"/>
    <property type="nucleotide sequence ID" value="NM_001374403.1"/>
</dbReference>
<dbReference type="RefSeq" id="NP_001366335.1">
    <molecule id="Q06330-6"/>
    <property type="nucleotide sequence ID" value="NM_001379406.1"/>
</dbReference>
<dbReference type="RefSeq" id="NP_001366336.1">
    <molecule id="Q06330-6"/>
    <property type="nucleotide sequence ID" value="NM_001379407.1"/>
</dbReference>
<dbReference type="RefSeq" id="NP_005340.2">
    <molecule id="Q06330-1"/>
    <property type="nucleotide sequence ID" value="NM_005349.3"/>
</dbReference>
<dbReference type="RefSeq" id="NP_056958.3">
    <molecule id="Q06330-7"/>
    <property type="nucleotide sequence ID" value="NM_015874.4"/>
</dbReference>
<dbReference type="RefSeq" id="NP_976028.2">
    <molecule id="Q06330-5"/>
    <property type="nucleotide sequence ID" value="NM_203283.5"/>
</dbReference>
<dbReference type="RefSeq" id="NP_976029.1">
    <molecule id="Q06330-6"/>
    <property type="nucleotide sequence ID" value="NM_203284.3"/>
</dbReference>
<dbReference type="RefSeq" id="XP_005248218.1">
    <property type="nucleotide sequence ID" value="XM_005248161.3"/>
</dbReference>
<dbReference type="RefSeq" id="XP_011512142.1">
    <molecule id="Q06330-6"/>
    <property type="nucleotide sequence ID" value="XM_011513840.4"/>
</dbReference>
<dbReference type="RefSeq" id="XP_016863661.1">
    <property type="nucleotide sequence ID" value="XM_017008172.1"/>
</dbReference>
<dbReference type="RefSeq" id="XP_016863662.1">
    <property type="nucleotide sequence ID" value="XM_017008173.1"/>
</dbReference>
<dbReference type="RefSeq" id="XP_016863663.1">
    <property type="nucleotide sequence ID" value="XM_017008174.1"/>
</dbReference>
<dbReference type="RefSeq" id="XP_016863664.1">
    <property type="nucleotide sequence ID" value="XM_017008175.1"/>
</dbReference>
<dbReference type="RefSeq" id="XP_047271613.1">
    <molecule id="Q06330-6"/>
    <property type="nucleotide sequence ID" value="XM_047415657.1"/>
</dbReference>
<dbReference type="RefSeq" id="XP_047271614.1">
    <molecule id="Q06330-5"/>
    <property type="nucleotide sequence ID" value="XM_047415658.1"/>
</dbReference>
<dbReference type="RefSeq" id="XP_054205932.1">
    <molecule id="Q06330-6"/>
    <property type="nucleotide sequence ID" value="XM_054349957.1"/>
</dbReference>
<dbReference type="RefSeq" id="XP_054205933.1">
    <molecule id="Q06330-6"/>
    <property type="nucleotide sequence ID" value="XM_054349958.1"/>
</dbReference>
<dbReference type="PDB" id="2F8X">
    <property type="method" value="X-ray"/>
    <property type="resolution" value="3.25 A"/>
    <property type="chains" value="C=23-449"/>
</dbReference>
<dbReference type="PDB" id="3NBN">
    <property type="method" value="X-ray"/>
    <property type="resolution" value="3.45 A"/>
    <property type="chains" value="A/D=23-448"/>
</dbReference>
<dbReference type="PDB" id="3V79">
    <property type="method" value="X-ray"/>
    <property type="resolution" value="3.85 A"/>
    <property type="chains" value="C=23-449"/>
</dbReference>
<dbReference type="PDB" id="6PY8">
    <property type="method" value="X-ray"/>
    <property type="resolution" value="3.75 A"/>
    <property type="chains" value="C/E=23-466"/>
</dbReference>
<dbReference type="PDBsum" id="2F8X"/>
<dbReference type="PDBsum" id="3NBN"/>
<dbReference type="PDBsum" id="3V79"/>
<dbReference type="PDBsum" id="6PY8"/>
<dbReference type="SMR" id="Q06330"/>
<dbReference type="BioGRID" id="109736">
    <property type="interactions" value="254"/>
</dbReference>
<dbReference type="ComplexPortal" id="CPX-937">
    <property type="entry name" value="CSL-NOTCH1-MAML transcriptional activation complex"/>
</dbReference>
<dbReference type="CORUM" id="Q06330"/>
<dbReference type="DIP" id="DIP-33326N"/>
<dbReference type="ELM" id="Q06330"/>
<dbReference type="FunCoup" id="Q06330">
    <property type="interactions" value="3055"/>
</dbReference>
<dbReference type="IntAct" id="Q06330">
    <property type="interactions" value="144"/>
</dbReference>
<dbReference type="MINT" id="Q06330"/>
<dbReference type="STRING" id="9606.ENSP00000345206"/>
<dbReference type="BindingDB" id="Q06330"/>
<dbReference type="ChEMBL" id="CHEMBL4105709"/>
<dbReference type="GlyCosmos" id="Q06330">
    <property type="glycosylation" value="1 site, 1 glycan"/>
</dbReference>
<dbReference type="GlyGen" id="Q06330">
    <property type="glycosylation" value="2 sites, 1 O-linked glycan (2 sites)"/>
</dbReference>
<dbReference type="iPTMnet" id="Q06330"/>
<dbReference type="PhosphoSitePlus" id="Q06330"/>
<dbReference type="BioMuta" id="RBPJ"/>
<dbReference type="DMDM" id="338817983"/>
<dbReference type="jPOST" id="Q06330"/>
<dbReference type="MassIVE" id="Q06330"/>
<dbReference type="PaxDb" id="9606-ENSP00000345206"/>
<dbReference type="PeptideAtlas" id="Q06330"/>
<dbReference type="ProteomicsDB" id="58432">
    <molecule id="Q06330-1"/>
</dbReference>
<dbReference type="ProteomicsDB" id="58433">
    <molecule id="Q06330-2"/>
</dbReference>
<dbReference type="ProteomicsDB" id="58434">
    <molecule id="Q06330-3"/>
</dbReference>
<dbReference type="ProteomicsDB" id="58435">
    <molecule id="Q06330-4"/>
</dbReference>
<dbReference type="ProteomicsDB" id="58436">
    <molecule id="Q06330-5"/>
</dbReference>
<dbReference type="ProteomicsDB" id="58437">
    <molecule id="Q06330-6"/>
</dbReference>
<dbReference type="ProteomicsDB" id="58438">
    <molecule id="Q06330-7"/>
</dbReference>
<dbReference type="Pumba" id="Q06330"/>
<dbReference type="TopDownProteomics" id="Q06330-3">
    <molecule id="Q06330-3"/>
</dbReference>
<dbReference type="Antibodypedia" id="10265">
    <property type="antibodies" value="452 antibodies from 41 providers"/>
</dbReference>
<dbReference type="DNASU" id="3516"/>
<dbReference type="Ensembl" id="ENST00000342295.6">
    <molecule id="Q06330-1"/>
    <property type="protein sequence ID" value="ENSP00000345206.1"/>
    <property type="gene ID" value="ENSG00000168214.22"/>
</dbReference>
<dbReference type="Ensembl" id="ENST00000342320.8">
    <molecule id="Q06330-6"/>
    <property type="protein sequence ID" value="ENSP00000340124.4"/>
    <property type="gene ID" value="ENSG00000168214.22"/>
</dbReference>
<dbReference type="Ensembl" id="ENST00000345843.8">
    <molecule id="Q06330-5"/>
    <property type="protein sequence ID" value="ENSP00000305815.6"/>
    <property type="gene ID" value="ENSG00000168214.22"/>
</dbReference>
<dbReference type="Ensembl" id="ENST00000348160.9">
    <molecule id="Q06330-6"/>
    <property type="protein sequence ID" value="ENSP00000339699.5"/>
    <property type="gene ID" value="ENSG00000168214.22"/>
</dbReference>
<dbReference type="Ensembl" id="ENST00000355476.8">
    <molecule id="Q06330-7"/>
    <property type="protein sequence ID" value="ENSP00000347659.4"/>
    <property type="gene ID" value="ENSG00000168214.22"/>
</dbReference>
<dbReference type="Ensembl" id="ENST00000361572.10">
    <molecule id="Q06330-1"/>
    <property type="protein sequence ID" value="ENSP00000354528.6"/>
    <property type="gene ID" value="ENSG00000168214.22"/>
</dbReference>
<dbReference type="Ensembl" id="ENST00000504423.2">
    <molecule id="Q06330-5"/>
    <property type="protein sequence ID" value="ENSP00000421804.2"/>
    <property type="gene ID" value="ENSG00000168214.22"/>
</dbReference>
<dbReference type="Ensembl" id="ENST00000505958.6">
    <molecule id="Q06330-6"/>
    <property type="protein sequence ID" value="ENSP00000426872.2"/>
    <property type="gene ID" value="ENSG00000168214.22"/>
</dbReference>
<dbReference type="Ensembl" id="ENST00000507561.5">
    <molecule id="Q06330-5"/>
    <property type="protein sequence ID" value="ENSP00000423907.1"/>
    <property type="gene ID" value="ENSG00000168214.22"/>
</dbReference>
<dbReference type="Ensembl" id="ENST00000512671.6">
    <molecule id="Q06330-1"/>
    <property type="protein sequence ID" value="ENSP00000423644.2"/>
    <property type="gene ID" value="ENSG00000168214.22"/>
</dbReference>
<dbReference type="Ensembl" id="ENST00000680928.1">
    <molecule id="Q06330-6"/>
    <property type="protein sequence ID" value="ENSP00000505493.1"/>
    <property type="gene ID" value="ENSG00000168214.22"/>
</dbReference>
<dbReference type="Ensembl" id="ENST00000681093.1">
    <molecule id="Q06330-6"/>
    <property type="protein sequence ID" value="ENSP00000504964.1"/>
    <property type="gene ID" value="ENSG00000168214.22"/>
</dbReference>
<dbReference type="Ensembl" id="ENST00000681264.1">
    <molecule id="Q06330-5"/>
    <property type="protein sequence ID" value="ENSP00000505255.1"/>
    <property type="gene ID" value="ENSG00000168214.22"/>
</dbReference>
<dbReference type="Ensembl" id="ENST00000681484.1">
    <molecule id="Q06330-5"/>
    <property type="protein sequence ID" value="ENSP00000505636.1"/>
    <property type="gene ID" value="ENSG00000168214.22"/>
</dbReference>
<dbReference type="GeneID" id="3516"/>
<dbReference type="KEGG" id="hsa:3516"/>
<dbReference type="MANE-Select" id="ENST00000355476.8">
    <molecule id="Q06330-7"/>
    <property type="protein sequence ID" value="ENSP00000347659.4"/>
    <property type="RefSeq nucleotide sequence ID" value="NM_015874.6"/>
    <property type="RefSeq protein sequence ID" value="NP_056958.3"/>
</dbReference>
<dbReference type="UCSC" id="uc003grx.3">
    <molecule id="Q06330-1"/>
    <property type="organism name" value="human"/>
</dbReference>
<dbReference type="AGR" id="HGNC:5724"/>
<dbReference type="CTD" id="3516"/>
<dbReference type="DisGeNET" id="3516"/>
<dbReference type="GeneCards" id="RBPJ"/>
<dbReference type="HGNC" id="HGNC:5724">
    <property type="gene designation" value="RBPJ"/>
</dbReference>
<dbReference type="HPA" id="ENSG00000168214">
    <property type="expression patterns" value="Low tissue specificity"/>
</dbReference>
<dbReference type="MalaCards" id="RBPJ"/>
<dbReference type="MIM" id="147183">
    <property type="type" value="gene"/>
</dbReference>
<dbReference type="MIM" id="614814">
    <property type="type" value="phenotype"/>
</dbReference>
<dbReference type="neXtProt" id="NX_Q06330"/>
<dbReference type="OpenTargets" id="ENSG00000168214"/>
<dbReference type="Orphanet" id="974">
    <property type="disease" value="Adams-Oliver syndrome"/>
</dbReference>
<dbReference type="PharmGKB" id="PA34292"/>
<dbReference type="VEuPathDB" id="HostDB:ENSG00000168214"/>
<dbReference type="eggNOG" id="KOG3743">
    <property type="taxonomic scope" value="Eukaryota"/>
</dbReference>
<dbReference type="GeneTree" id="ENSGT00390000005197"/>
<dbReference type="HOGENOM" id="CLU_022207_2_1_1"/>
<dbReference type="InParanoid" id="Q06330"/>
<dbReference type="OMA" id="QRQDMPH"/>
<dbReference type="OrthoDB" id="5600360at2759"/>
<dbReference type="PAN-GO" id="Q06330">
    <property type="GO annotations" value="4 GO annotations based on evolutionary models"/>
</dbReference>
<dbReference type="PhylomeDB" id="Q06330"/>
<dbReference type="TreeFam" id="TF314117"/>
<dbReference type="PathwayCommons" id="Q06330"/>
<dbReference type="Reactome" id="R-HSA-1912408">
    <property type="pathway name" value="Pre-NOTCH Transcription and Translation"/>
</dbReference>
<dbReference type="Reactome" id="R-HSA-210744">
    <property type="pathway name" value="Regulation of gene expression in late stage (branching morphogenesis) pancreatic bud precursor cells"/>
</dbReference>
<dbReference type="Reactome" id="R-HSA-2122947">
    <property type="pathway name" value="NOTCH1 Intracellular Domain Regulates Transcription"/>
</dbReference>
<dbReference type="Reactome" id="R-HSA-2197563">
    <property type="pathway name" value="NOTCH2 intracellular domain regulates transcription"/>
</dbReference>
<dbReference type="Reactome" id="R-HSA-2644606">
    <property type="pathway name" value="Constitutive Signaling by NOTCH1 PEST Domain Mutants"/>
</dbReference>
<dbReference type="Reactome" id="R-HSA-2894862">
    <property type="pathway name" value="Constitutive Signaling by NOTCH1 HD+PEST Domain Mutants"/>
</dbReference>
<dbReference type="Reactome" id="R-HSA-350054">
    <property type="pathway name" value="Notch-HLH transcription pathway"/>
</dbReference>
<dbReference type="Reactome" id="R-HSA-8941856">
    <property type="pathway name" value="RUNX3 regulates NOTCH signaling"/>
</dbReference>
<dbReference type="Reactome" id="R-HSA-9013508">
    <property type="pathway name" value="NOTCH3 Intracellular Domain Regulates Transcription"/>
</dbReference>
<dbReference type="Reactome" id="R-HSA-9013695">
    <property type="pathway name" value="NOTCH4 Intracellular Domain Regulates Transcription"/>
</dbReference>
<dbReference type="Reactome" id="R-HSA-9793380">
    <property type="pathway name" value="Formation of paraxial mesoderm"/>
</dbReference>
<dbReference type="Reactome" id="R-HSA-9824272">
    <property type="pathway name" value="Somitogenesis"/>
</dbReference>
<dbReference type="SignaLink" id="Q06330"/>
<dbReference type="SIGNOR" id="Q06330"/>
<dbReference type="BioGRID-ORCS" id="3516">
    <property type="hits" value="33 hits in 1163 CRISPR screens"/>
</dbReference>
<dbReference type="ChiTaRS" id="RBPJ">
    <property type="organism name" value="human"/>
</dbReference>
<dbReference type="EvolutionaryTrace" id="Q06330"/>
<dbReference type="GeneWiki" id="RBPJ"/>
<dbReference type="GenomeRNAi" id="3516"/>
<dbReference type="Pharos" id="Q06330">
    <property type="development level" value="Tchem"/>
</dbReference>
<dbReference type="PRO" id="PR:Q06330"/>
<dbReference type="Proteomes" id="UP000005640">
    <property type="component" value="Chromosome 4"/>
</dbReference>
<dbReference type="RNAct" id="Q06330">
    <property type="molecule type" value="protein"/>
</dbReference>
<dbReference type="Bgee" id="ENSG00000168214">
    <property type="expression patterns" value="Expressed in inferior olivary complex and 211 other cell types or tissues"/>
</dbReference>
<dbReference type="ExpressionAtlas" id="Q06330">
    <property type="expression patterns" value="baseline and differential"/>
</dbReference>
<dbReference type="GO" id="GO:0000785">
    <property type="term" value="C:chromatin"/>
    <property type="evidence" value="ECO:0000247"/>
    <property type="project" value="NTNU_SB"/>
</dbReference>
<dbReference type="GO" id="GO:0005737">
    <property type="term" value="C:cytoplasm"/>
    <property type="evidence" value="ECO:0000314"/>
    <property type="project" value="UniProtKB"/>
</dbReference>
<dbReference type="GO" id="GO:0002193">
    <property type="term" value="C:MAML1-RBP-Jkappa- ICN1 complex"/>
    <property type="evidence" value="ECO:0000314"/>
    <property type="project" value="UniProtKB"/>
</dbReference>
<dbReference type="GO" id="GO:0005730">
    <property type="term" value="C:nucleolus"/>
    <property type="evidence" value="ECO:0000314"/>
    <property type="project" value="UniProtKB"/>
</dbReference>
<dbReference type="GO" id="GO:0005654">
    <property type="term" value="C:nucleoplasm"/>
    <property type="evidence" value="ECO:0000314"/>
    <property type="project" value="HPA"/>
</dbReference>
<dbReference type="GO" id="GO:0005634">
    <property type="term" value="C:nucleus"/>
    <property type="evidence" value="ECO:0000314"/>
    <property type="project" value="UniProtKB"/>
</dbReference>
<dbReference type="GO" id="GO:0017053">
    <property type="term" value="C:transcription repressor complex"/>
    <property type="evidence" value="ECO:0000314"/>
    <property type="project" value="CAFA"/>
</dbReference>
<dbReference type="GO" id="GO:0003682">
    <property type="term" value="F:chromatin binding"/>
    <property type="evidence" value="ECO:0007669"/>
    <property type="project" value="Ensembl"/>
</dbReference>
<dbReference type="GO" id="GO:0003677">
    <property type="term" value="F:DNA binding"/>
    <property type="evidence" value="ECO:0000304"/>
    <property type="project" value="UniProtKB"/>
</dbReference>
<dbReference type="GO" id="GO:0001228">
    <property type="term" value="F:DNA-binding transcription activator activity, RNA polymerase II-specific"/>
    <property type="evidence" value="ECO:0000314"/>
    <property type="project" value="MGI"/>
</dbReference>
<dbReference type="GO" id="GO:0003700">
    <property type="term" value="F:DNA-binding transcription factor activity"/>
    <property type="evidence" value="ECO:0000304"/>
    <property type="project" value="UniProtKB"/>
</dbReference>
<dbReference type="GO" id="GO:0000981">
    <property type="term" value="F:DNA-binding transcription factor activity, RNA polymerase II-specific"/>
    <property type="evidence" value="ECO:0000247"/>
    <property type="project" value="NTNU_SB"/>
</dbReference>
<dbReference type="GO" id="GO:0140297">
    <property type="term" value="F:DNA-binding transcription factor binding"/>
    <property type="evidence" value="ECO:0000314"/>
    <property type="project" value="UniProtKB"/>
</dbReference>
<dbReference type="GO" id="GO:0000978">
    <property type="term" value="F:RNA polymerase II cis-regulatory region sequence-specific DNA binding"/>
    <property type="evidence" value="ECO:0000314"/>
    <property type="project" value="CAFA"/>
</dbReference>
<dbReference type="GO" id="GO:0061629">
    <property type="term" value="F:RNA polymerase II-specific DNA-binding transcription factor binding"/>
    <property type="evidence" value="ECO:0000353"/>
    <property type="project" value="BHF-UCL"/>
</dbReference>
<dbReference type="GO" id="GO:0043565">
    <property type="term" value="F:sequence-specific DNA binding"/>
    <property type="evidence" value="ECO:0000314"/>
    <property type="project" value="UniProtKB"/>
</dbReference>
<dbReference type="GO" id="GO:0001525">
    <property type="term" value="P:angiogenesis"/>
    <property type="evidence" value="ECO:0000250"/>
    <property type="project" value="BHF-UCL"/>
</dbReference>
<dbReference type="GO" id="GO:0003176">
    <property type="term" value="P:aortic valve development"/>
    <property type="evidence" value="ECO:0000250"/>
    <property type="project" value="BHF-UCL"/>
</dbReference>
<dbReference type="GO" id="GO:0060844">
    <property type="term" value="P:arterial endothelial cell fate commitment"/>
    <property type="evidence" value="ECO:0007669"/>
    <property type="project" value="Ensembl"/>
</dbReference>
<dbReference type="GO" id="GO:0036302">
    <property type="term" value="P:atrioventricular canal development"/>
    <property type="evidence" value="ECO:0000250"/>
    <property type="project" value="BHF-UCL"/>
</dbReference>
<dbReference type="GO" id="GO:0009912">
    <property type="term" value="P:auditory receptor cell fate commitment"/>
    <property type="evidence" value="ECO:0007669"/>
    <property type="project" value="Ensembl"/>
</dbReference>
<dbReference type="GO" id="GO:0030183">
    <property type="term" value="P:B cell differentiation"/>
    <property type="evidence" value="ECO:0007669"/>
    <property type="project" value="Ensembl"/>
</dbReference>
<dbReference type="GO" id="GO:0097101">
    <property type="term" value="P:blood vessel endothelial cell fate specification"/>
    <property type="evidence" value="ECO:0000250"/>
    <property type="project" value="BHF-UCL"/>
</dbReference>
<dbReference type="GO" id="GO:0072554">
    <property type="term" value="P:blood vessel lumenization"/>
    <property type="evidence" value="ECO:0000250"/>
    <property type="project" value="BHF-UCL"/>
</dbReference>
<dbReference type="GO" id="GO:0001974">
    <property type="term" value="P:blood vessel remodeling"/>
    <property type="evidence" value="ECO:0000250"/>
    <property type="project" value="ARUK-UCL"/>
</dbReference>
<dbReference type="GO" id="GO:0003214">
    <property type="term" value="P:cardiac left ventricle morphogenesis"/>
    <property type="evidence" value="ECO:0000250"/>
    <property type="project" value="BHF-UCL"/>
</dbReference>
<dbReference type="GO" id="GO:0060379">
    <property type="term" value="P:cardiac muscle cell myoblast differentiation"/>
    <property type="evidence" value="ECO:0000250"/>
    <property type="project" value="BHF-UCL"/>
</dbReference>
<dbReference type="GO" id="GO:0060486">
    <property type="term" value="P:club cell differentiation"/>
    <property type="evidence" value="ECO:0007669"/>
    <property type="project" value="Ensembl"/>
</dbReference>
<dbReference type="GO" id="GO:0042742">
    <property type="term" value="P:defense response to bacterium"/>
    <property type="evidence" value="ECO:0007669"/>
    <property type="project" value="Ensembl"/>
</dbReference>
<dbReference type="GO" id="GO:0035912">
    <property type="term" value="P:dorsal aorta morphogenesis"/>
    <property type="evidence" value="ECO:0000250"/>
    <property type="project" value="BHF-UCL"/>
</dbReference>
<dbReference type="GO" id="GO:0003160">
    <property type="term" value="P:endocardium morphogenesis"/>
    <property type="evidence" value="ECO:0000250"/>
    <property type="project" value="BHF-UCL"/>
</dbReference>
<dbReference type="GO" id="GO:0009957">
    <property type="term" value="P:epidermal cell fate specification"/>
    <property type="evidence" value="ECO:0007669"/>
    <property type="project" value="Ensembl"/>
</dbReference>
<dbReference type="GO" id="GO:0050673">
    <property type="term" value="P:epithelial cell proliferation"/>
    <property type="evidence" value="ECO:0007669"/>
    <property type="project" value="Ensembl"/>
</dbReference>
<dbReference type="GO" id="GO:0001837">
    <property type="term" value="P:epithelial to mesenchymal transition"/>
    <property type="evidence" value="ECO:0000250"/>
    <property type="project" value="BHF-UCL"/>
</dbReference>
<dbReference type="GO" id="GO:0003198">
    <property type="term" value="P:epithelial to mesenchymal transition involved in endocardial cushion formation"/>
    <property type="evidence" value="ECO:0000250"/>
    <property type="project" value="BHF-UCL"/>
</dbReference>
<dbReference type="GO" id="GO:0048820">
    <property type="term" value="P:hair follicle maturation"/>
    <property type="evidence" value="ECO:0007669"/>
    <property type="project" value="Ensembl"/>
</dbReference>
<dbReference type="GO" id="GO:0007507">
    <property type="term" value="P:heart development"/>
    <property type="evidence" value="ECO:0000315"/>
    <property type="project" value="ARUK-UCL"/>
</dbReference>
<dbReference type="GO" id="GO:0006959">
    <property type="term" value="P:humoral immune response"/>
    <property type="evidence" value="ECO:0007669"/>
    <property type="project" value="Ensembl"/>
</dbReference>
<dbReference type="GO" id="GO:0002437">
    <property type="term" value="P:inflammatory response to antigenic stimulus"/>
    <property type="evidence" value="ECO:0007669"/>
    <property type="project" value="Ensembl"/>
</dbReference>
<dbReference type="GO" id="GO:0030216">
    <property type="term" value="P:keratinocyte differentiation"/>
    <property type="evidence" value="ECO:0007669"/>
    <property type="project" value="Ensembl"/>
</dbReference>
<dbReference type="GO" id="GO:0060716">
    <property type="term" value="P:labyrinthine layer blood vessel development"/>
    <property type="evidence" value="ECO:0000250"/>
    <property type="project" value="BHF-UCL"/>
</dbReference>
<dbReference type="GO" id="GO:0043011">
    <property type="term" value="P:myeloid dendritic cell differentiation"/>
    <property type="evidence" value="ECO:0007669"/>
    <property type="project" value="Ensembl"/>
</dbReference>
<dbReference type="GO" id="GO:0045596">
    <property type="term" value="P:negative regulation of cell differentiation"/>
    <property type="evidence" value="ECO:0007669"/>
    <property type="project" value="Ensembl"/>
</dbReference>
<dbReference type="GO" id="GO:0120163">
    <property type="term" value="P:negative regulation of cold-induced thermogenesis"/>
    <property type="evidence" value="ECO:0000250"/>
    <property type="project" value="YuBioLab"/>
</dbReference>
<dbReference type="GO" id="GO:0045892">
    <property type="term" value="P:negative regulation of DNA-templated transcription"/>
    <property type="evidence" value="ECO:0000314"/>
    <property type="project" value="UniProtKB"/>
</dbReference>
<dbReference type="GO" id="GO:0030279">
    <property type="term" value="P:negative regulation of ossification"/>
    <property type="evidence" value="ECO:0000250"/>
    <property type="project" value="BHF-UCL"/>
</dbReference>
<dbReference type="GO" id="GO:2000647">
    <property type="term" value="P:negative regulation of stem cell proliferation"/>
    <property type="evidence" value="ECO:0007669"/>
    <property type="project" value="Ensembl"/>
</dbReference>
<dbReference type="GO" id="GO:0000122">
    <property type="term" value="P:negative regulation of transcription by RNA polymerase II"/>
    <property type="evidence" value="ECO:0000315"/>
    <property type="project" value="BHF-UCL"/>
</dbReference>
<dbReference type="GO" id="GO:0007219">
    <property type="term" value="P:Notch signaling pathway"/>
    <property type="evidence" value="ECO:0000315"/>
    <property type="project" value="BHF-UCL"/>
</dbReference>
<dbReference type="GO" id="GO:0003151">
    <property type="term" value="P:outflow tract morphogenesis"/>
    <property type="evidence" value="ECO:0000250"/>
    <property type="project" value="BHF-UCL"/>
</dbReference>
<dbReference type="GO" id="GO:0021983">
    <property type="term" value="P:pituitary gland development"/>
    <property type="evidence" value="ECO:0007669"/>
    <property type="project" value="Ensembl"/>
</dbReference>
<dbReference type="GO" id="GO:0030513">
    <property type="term" value="P:positive regulation of BMP signaling pathway"/>
    <property type="evidence" value="ECO:0000250"/>
    <property type="project" value="BHF-UCL"/>
</dbReference>
<dbReference type="GO" id="GO:0090263">
    <property type="term" value="P:positive regulation of canonical Wnt signaling pathway"/>
    <property type="evidence" value="ECO:0007669"/>
    <property type="project" value="Ensembl"/>
</dbReference>
<dbReference type="GO" id="GO:0060045">
    <property type="term" value="P:positive regulation of cardiac muscle cell proliferation"/>
    <property type="evidence" value="ECO:0000250"/>
    <property type="project" value="BHF-UCL"/>
</dbReference>
<dbReference type="GO" id="GO:2000138">
    <property type="term" value="P:positive regulation of cell proliferation involved in heart morphogenesis"/>
    <property type="evidence" value="ECO:0000250"/>
    <property type="project" value="BHF-UCL"/>
</dbReference>
<dbReference type="GO" id="GO:1901189">
    <property type="term" value="P:positive regulation of ephrin receptor signaling pathway"/>
    <property type="evidence" value="ECO:0000250"/>
    <property type="project" value="BHF-UCL"/>
</dbReference>
<dbReference type="GO" id="GO:0050679">
    <property type="term" value="P:positive regulation of epithelial cell proliferation"/>
    <property type="evidence" value="ECO:0007669"/>
    <property type="project" value="Ensembl"/>
</dbReference>
<dbReference type="GO" id="GO:1901186">
    <property type="term" value="P:positive regulation of ERBB signaling pathway"/>
    <property type="evidence" value="ECO:0000250"/>
    <property type="project" value="BHF-UCL"/>
</dbReference>
<dbReference type="GO" id="GO:0010628">
    <property type="term" value="P:positive regulation of gene expression"/>
    <property type="evidence" value="ECO:0007669"/>
    <property type="project" value="Ensembl"/>
</dbReference>
<dbReference type="GO" id="GO:0045944">
    <property type="term" value="P:positive regulation of transcription by RNA polymerase II"/>
    <property type="evidence" value="ECO:0000314"/>
    <property type="project" value="UniProtKB"/>
</dbReference>
<dbReference type="GO" id="GO:0007221">
    <property type="term" value="P:positive regulation of transcription of Notch receptor target"/>
    <property type="evidence" value="ECO:0000314"/>
    <property type="project" value="UniProtKB"/>
</dbReference>
<dbReference type="GO" id="GO:0003177">
    <property type="term" value="P:pulmonary valve development"/>
    <property type="evidence" value="ECO:0000250"/>
    <property type="project" value="BHF-UCL"/>
</dbReference>
<dbReference type="GO" id="GO:0061344">
    <property type="term" value="P:regulation of cell adhesion involved in heart morphogenesis"/>
    <property type="evidence" value="ECO:0007669"/>
    <property type="project" value="Ensembl"/>
</dbReference>
<dbReference type="GO" id="GO:0043467">
    <property type="term" value="P:regulation of generation of precursor metabolites and energy"/>
    <property type="evidence" value="ECO:0000314"/>
    <property type="project" value="UniProtKB"/>
</dbReference>
<dbReference type="GO" id="GO:0048505">
    <property type="term" value="P:regulation of timing of cell differentiation"/>
    <property type="evidence" value="ECO:0007669"/>
    <property type="project" value="Ensembl"/>
</dbReference>
<dbReference type="GO" id="GO:0006357">
    <property type="term" value="P:regulation of transcription by RNA polymerase II"/>
    <property type="evidence" value="ECO:0000250"/>
    <property type="project" value="BHF-UCL"/>
</dbReference>
<dbReference type="GO" id="GO:0048733">
    <property type="term" value="P:sebaceous gland development"/>
    <property type="evidence" value="ECO:0007669"/>
    <property type="project" value="Ensembl"/>
</dbReference>
<dbReference type="GO" id="GO:0003139">
    <property type="term" value="P:secondary heart field specification"/>
    <property type="evidence" value="ECO:0007669"/>
    <property type="project" value="Ensembl"/>
</dbReference>
<dbReference type="GO" id="GO:0035019">
    <property type="term" value="P:somatic stem cell population maintenance"/>
    <property type="evidence" value="ECO:0007669"/>
    <property type="project" value="Ensembl"/>
</dbReference>
<dbReference type="GO" id="GO:0001756">
    <property type="term" value="P:somitogenesis"/>
    <property type="evidence" value="ECO:0007669"/>
    <property type="project" value="Ensembl"/>
</dbReference>
<dbReference type="GO" id="GO:0072089">
    <property type="term" value="P:stem cell proliferation"/>
    <property type="evidence" value="ECO:0007669"/>
    <property type="project" value="Ensembl"/>
</dbReference>
<dbReference type="GO" id="GO:0060412">
    <property type="term" value="P:ventricular septum morphogenesis"/>
    <property type="evidence" value="ECO:0007669"/>
    <property type="project" value="Ensembl"/>
</dbReference>
<dbReference type="GO" id="GO:0003222">
    <property type="term" value="P:ventricular trabecula myocardium morphogenesis"/>
    <property type="evidence" value="ECO:0000250"/>
    <property type="project" value="BHF-UCL"/>
</dbReference>
<dbReference type="CDD" id="cd01176">
    <property type="entry name" value="IPT_RBP-Jkappa"/>
    <property type="match status" value="1"/>
</dbReference>
<dbReference type="FunFam" id="2.60.40.1450:FF:000001">
    <property type="entry name" value="Recombining binding protein suppressor of hairless"/>
    <property type="match status" value="1"/>
</dbReference>
<dbReference type="FunFam" id="2.80.10.50:FF:000003">
    <property type="entry name" value="recombining binding protein suppressor of hairless"/>
    <property type="match status" value="1"/>
</dbReference>
<dbReference type="FunFam" id="2.60.40.10:FF:000074">
    <property type="entry name" value="Recombining binding protein suppressor of hairless, putative"/>
    <property type="match status" value="1"/>
</dbReference>
<dbReference type="Gene3D" id="2.80.10.50">
    <property type="match status" value="1"/>
</dbReference>
<dbReference type="Gene3D" id="2.60.40.10">
    <property type="entry name" value="Immunoglobulins"/>
    <property type="match status" value="1"/>
</dbReference>
<dbReference type="Gene3D" id="2.60.40.1450">
    <property type="entry name" value="LAG1, DNA binding domain"/>
    <property type="match status" value="1"/>
</dbReference>
<dbReference type="IDEAL" id="IID00380"/>
<dbReference type="InterPro" id="IPR015350">
    <property type="entry name" value="Beta-trefoil_DNA-bd_dom"/>
</dbReference>
<dbReference type="InterPro" id="IPR036358">
    <property type="entry name" value="BTD_sf"/>
</dbReference>
<dbReference type="InterPro" id="IPR040159">
    <property type="entry name" value="CLS_fam"/>
</dbReference>
<dbReference type="InterPro" id="IPR013783">
    <property type="entry name" value="Ig-like_fold"/>
</dbReference>
<dbReference type="InterPro" id="IPR014756">
    <property type="entry name" value="Ig_E-set"/>
</dbReference>
<dbReference type="InterPro" id="IPR008967">
    <property type="entry name" value="p53-like_TF_DNA-bd_sf"/>
</dbReference>
<dbReference type="InterPro" id="IPR015351">
    <property type="entry name" value="RBP-J/Cbf11/Cbf12_DNA-bd"/>
</dbReference>
<dbReference type="InterPro" id="IPR037095">
    <property type="entry name" value="RBP-J/Cbf11_DNA-bd_sf"/>
</dbReference>
<dbReference type="InterPro" id="IPR038007">
    <property type="entry name" value="RBP-Jkappa_IPT"/>
</dbReference>
<dbReference type="PANTHER" id="PTHR10665">
    <property type="entry name" value="RECOMBINING BINDING PROTEIN SUPPRESSOR OF HAIRLESS"/>
    <property type="match status" value="1"/>
</dbReference>
<dbReference type="Pfam" id="PF09270">
    <property type="entry name" value="BTD"/>
    <property type="match status" value="1"/>
</dbReference>
<dbReference type="Pfam" id="PF09271">
    <property type="entry name" value="LAG1-DNAbind"/>
    <property type="match status" value="1"/>
</dbReference>
<dbReference type="Pfam" id="PF20144">
    <property type="entry name" value="TIG_SUH"/>
    <property type="match status" value="1"/>
</dbReference>
<dbReference type="SMART" id="SM01268">
    <property type="entry name" value="BTD"/>
    <property type="match status" value="1"/>
</dbReference>
<dbReference type="SMART" id="SM01267">
    <property type="entry name" value="LAG1_DNAbind"/>
    <property type="match status" value="1"/>
</dbReference>
<dbReference type="SUPFAM" id="SSF110217">
    <property type="entry name" value="DNA-binding protein LAG-1 (CSL)"/>
    <property type="match status" value="1"/>
</dbReference>
<dbReference type="SUPFAM" id="SSF81296">
    <property type="entry name" value="E set domains"/>
    <property type="match status" value="1"/>
</dbReference>
<dbReference type="SUPFAM" id="SSF49417">
    <property type="entry name" value="p53-like transcription factors"/>
    <property type="match status" value="1"/>
</dbReference>
<name>SUH_HUMAN</name>
<sequence>MDHTEGSPAEEPPAHAPSPGKFGERPPPKRLTREAMRNYLKERGDQTVLILHAKVAQKSYGNEKRFFCPPPCVYLMGSGWKKKKEQMERDGCSEQESQPCAFIGIGNSDQEMQQLNLEGKNYCTAKTLYISDSDKRKHFMLSVKMFYGNSDDIGVFLSKRIKVISKPSKKKQSLKNADLCIASGTKVALFNRLRSQTVSTRYLHVEGGNFHASSQQWGAFFIHLLDDDESEGEEFTVRDGYIHYGQTVKLVCSVTGMALPRLIIRKVDKQTALLDADDPVSQLHKCAFYLKDTERMYLCLSQERIIQFQATPCPKEPNKEMINDGASWTIISTDKAEYTFYEGMGPVLAPVTPVPVVESLQLNGGGDVAMLELTGQNFTPNLRVWFGDVEAETMYRCGESMLCVVPDISAFREGWRWVRQPVQVPVTLVRNDGIIYSTSLTFTYTPEPGPRPHCSAAGAILRANSSQVPPNESNTNSEGSYTNASTNSTSVTSSTATVVS</sequence>